<gene>
    <name type="primary">TIRAP</name>
    <name type="synonym">MAL</name>
</gene>
<sequence>MASSTSLPAPGSRPKKPLGKMADWFRQTLLKKPKKRPNSPESTSSDASQPTSQDSPLPPSLSSVTSPSLPPTHASDSGSSRWSKDYDVCVCHSEEDLVAAQDLVSYLEGSTASLRCFLQLRDATPGGAIVSELCQALSSSHCRVLLITPGFLQDPWCKYQMLQALTEAPGAEGCTIPLLSGLSRAAYPPELRFMYYVDGRGPDGGFRQVKEAVMRYLQTLS</sequence>
<protein>
    <recommendedName>
        <fullName>Toll/interleukin-1 receptor domain-containing adapter protein</fullName>
        <shortName>TIR domain-containing adapter protein</shortName>
    </recommendedName>
    <alternativeName>
        <fullName>Adaptor protein Wyatt</fullName>
    </alternativeName>
    <alternativeName>
        <fullName>MyD88 adapter-like protein</fullName>
        <shortName>MyD88-2</shortName>
    </alternativeName>
</protein>
<accession>P58753</accession>
<accession>B3KW65</accession>
<accession>Q56UH9</accession>
<accession>Q56UI0</accession>
<accession>Q8N5E5</accession>
<keyword id="KW-0002">3D-structure</keyword>
<keyword id="KW-0025">Alternative splicing</keyword>
<keyword id="KW-1003">Cell membrane</keyword>
<keyword id="KW-0963">Cytoplasm</keyword>
<keyword id="KW-1015">Disulfide bond</keyword>
<keyword id="KW-0391">Immunity</keyword>
<keyword id="KW-0395">Inflammatory response</keyword>
<keyword id="KW-0399">Innate immunity</keyword>
<keyword id="KW-0472">Membrane</keyword>
<keyword id="KW-0597">Phosphoprotein</keyword>
<keyword id="KW-1267">Proteomics identification</keyword>
<keyword id="KW-1185">Reference proteome</keyword>
<keyword id="KW-0832">Ubl conjugation</keyword>
<feature type="chain" id="PRO_0000072547" description="Toll/interleukin-1 receptor domain-containing adapter protein">
    <location>
        <begin position="1"/>
        <end position="221"/>
    </location>
</feature>
<feature type="domain" description="TIR" evidence="2">
    <location>
        <begin position="84"/>
        <end position="213"/>
    </location>
</feature>
<feature type="region of interest" description="Disordered" evidence="3">
    <location>
        <begin position="1"/>
        <end position="82"/>
    </location>
</feature>
<feature type="compositionally biased region" description="Low complexity" evidence="3">
    <location>
        <begin position="48"/>
        <end position="67"/>
    </location>
</feature>
<feature type="disulfide bond" evidence="16 17 26">
    <location>
        <begin position="89"/>
        <end position="134"/>
    </location>
</feature>
<feature type="disulfide bond" evidence="16 17 26">
    <location>
        <begin position="142"/>
        <end position="174"/>
    </location>
</feature>
<feature type="splice variant" id="VSP_010765" description="In isoform 2." evidence="20 21 22 24">
    <original>YLQTLS</original>
    <variation>CKLLQEGEGERDSATVSDLL</variation>
    <location>
        <begin position="216"/>
        <end position="221"/>
    </location>
</feature>
<feature type="splice variant" id="VSP_017239" description="In isoform 3." evidence="23">
    <original>S</original>
    <variation>WHLLYHGTPEIGVKLETENPCRASDSHKCDKRYRE</variation>
    <location>
        <position position="221"/>
    </location>
</feature>
<feature type="sequence variant" id="VAR_019143" description="Does not affect NF-kappa-B activation and TNF production; dbSNP:rs8177369." evidence="12 19">
    <original>A</original>
    <variation>P</variation>
    <location>
        <position position="9"/>
    </location>
</feature>
<feature type="sequence variant" id="VAR_019144" description="Does not affect NF-kappa-B activation and TNF production; dbSNP:rs8177399." evidence="12 19">
    <original>R</original>
    <variation>W</variation>
    <location>
        <position position="13"/>
    </location>
</feature>
<feature type="sequence variant" id="VAR_036691" description="Does not affect NF-kappa-B activation and TNF production; dbSNP:rs3802813." evidence="5 7">
    <original>S</original>
    <variation>N</variation>
    <location>
        <position position="55"/>
    </location>
</feature>
<feature type="sequence variant" id="VAR_019145" description="Hypomorphic variant resulting in impaired NF-kappa-B activation and TNF production; loss of interaction with MYD88; dbSNP:rs8177400." evidence="12 19">
    <original>D</original>
    <variation>N</variation>
    <location>
        <position position="96"/>
    </location>
</feature>
<feature type="sequence variant" id="VAR_019146" description="The functional impact of this variant is unclear; it has been reported both to affect interaction with TLR2, hence attenuating TLR2 signal transduction and to have no effect on NF-kappa-B activation and TNF production; dbSNP:rs8177374." evidence="9 11 12 13 19">
    <original>S</original>
    <variation>L</variation>
    <location>
        <position position="180"/>
    </location>
</feature>
<feature type="sequence variant" id="VAR_061713" description="Does not affect NF-kappa-B activation and TNF production; dbSNP:rs7932976." evidence="12">
    <original>V</original>
    <variation>I</variation>
    <location>
        <position position="197"/>
    </location>
</feature>
<feature type="mutagenesis site" description="Abolishes NF-kappa-B activation." evidence="4 5">
    <original>P</original>
    <variation>H</variation>
    <location>
        <position position="125"/>
    </location>
</feature>
<feature type="helix" evidence="29">
    <location>
        <begin position="17"/>
        <end position="28"/>
    </location>
</feature>
<feature type="strand" evidence="28">
    <location>
        <begin position="83"/>
        <end position="91"/>
    </location>
</feature>
<feature type="helix" evidence="28">
    <location>
        <begin position="94"/>
        <end position="96"/>
    </location>
</feature>
<feature type="helix" evidence="28">
    <location>
        <begin position="97"/>
        <end position="108"/>
    </location>
</feature>
<feature type="turn" evidence="27">
    <location>
        <begin position="109"/>
        <end position="111"/>
    </location>
</feature>
<feature type="strand" evidence="28">
    <location>
        <begin position="131"/>
        <end position="133"/>
    </location>
</feature>
<feature type="helix" evidence="27">
    <location>
        <begin position="135"/>
        <end position="139"/>
    </location>
</feature>
<feature type="strand" evidence="28">
    <location>
        <begin position="140"/>
        <end position="147"/>
    </location>
</feature>
<feature type="helix" evidence="28">
    <location>
        <begin position="149"/>
        <end position="153"/>
    </location>
</feature>
<feature type="helix" evidence="28">
    <location>
        <begin position="155"/>
        <end position="166"/>
    </location>
</feature>
<feature type="strand" evidence="28">
    <location>
        <begin position="168"/>
        <end position="179"/>
    </location>
</feature>
<feature type="helix" evidence="28">
    <location>
        <begin position="184"/>
        <end position="186"/>
    </location>
</feature>
<feature type="helix" evidence="28">
    <location>
        <begin position="189"/>
        <end position="193"/>
    </location>
</feature>
<feature type="helix" evidence="28">
    <location>
        <begin position="202"/>
        <end position="205"/>
    </location>
</feature>
<feature type="helix" evidence="28">
    <location>
        <begin position="206"/>
        <end position="217"/>
    </location>
</feature>
<comment type="function">
    <text evidence="10 12 15">Adapter involved in TLR2, TLR4 and RAGE signaling pathways in the innate immune response. Acts via IRAK2 and TRAF-6, leading to the activation of NF-kappa-B, MAPK1, MAPK3 and JNK, and resulting in cytokine secretion and the inflammatory response. Positively regulates the production of TNF-alpha (TNF) and interleukin-6 (IL6).</text>
</comment>
<comment type="subunit">
    <text evidence="1 4 6 9 10 12 14 15 16">Homodimer (PubMed:17322885). Also forms heterodimers with MYD88 (PubMed:17322885). May interact with PIK3AP1 (By similarity). Interacts with TLR4 and IRAK2 via their respective TIR domains. Interacts with BMX and TBK1. Interacts with EIF2AK2. Does not interact with IRAK1, nor TLR9. Interacts with TLR2 (PubMed:17322885). Interacts with RAGE/AGER (PubMed:21829704).</text>
</comment>
<comment type="subunit">
    <text evidence="17 18">(Microbial infection) In case of infection, interacts with B.melitensis protein TcpB (AC Q8YF53); TcpB abolishes the TLR4-TIRAP interaction and downstream signaling.</text>
</comment>
<comment type="interaction">
    <interactant intactId="EBI-528644">
        <id>P58753</id>
    </interactant>
    <interactant intactId="EBI-1646426">
        <id>Q15109</id>
        <label>AGER</label>
    </interactant>
    <organismsDiffer>false</organismsDiffer>
    <experiments>9</experiments>
</comment>
<comment type="interaction">
    <interactant intactId="EBI-528644">
        <id>P58753</id>
    </interactant>
    <interactant intactId="EBI-365961">
        <id>P10398</id>
        <label>ARAF</label>
    </interactant>
    <organismsDiffer>false</organismsDiffer>
    <experiments>2</experiments>
</comment>
<comment type="interaction">
    <interactant intactId="EBI-528644">
        <id>P58753</id>
    </interactant>
    <interactant intactId="EBI-720151">
        <id>Q96A33</id>
        <label>CCDC47</label>
    </interactant>
    <organismsDiffer>false</organismsDiffer>
    <experiments>2</experiments>
</comment>
<comment type="interaction">
    <interactant intactId="EBI-528644">
        <id>P58753</id>
    </interactant>
    <interactant intactId="EBI-358664">
        <id>P51617</id>
        <label>IRAK1</label>
    </interactant>
    <organismsDiffer>false</organismsDiffer>
    <experiments>3</experiments>
</comment>
<comment type="interaction">
    <interactant intactId="EBI-528644">
        <id>P58753</id>
    </interactant>
    <interactant intactId="EBI-447733">
        <id>O43187</id>
        <label>IRAK2</label>
    </interactant>
    <organismsDiffer>false</organismsDiffer>
    <experiments>2</experiments>
</comment>
<comment type="interaction">
    <interactant intactId="EBI-528644">
        <id>P58753</id>
    </interactant>
    <interactant intactId="EBI-448378">
        <id>Q9NWZ3</id>
        <label>IRAK4</label>
    </interactant>
    <organismsDiffer>false</organismsDiffer>
    <experiments>2</experiments>
</comment>
<comment type="interaction">
    <interactant intactId="EBI-528644">
        <id>P58753</id>
    </interactant>
    <interactant intactId="EBI-1044684">
        <id>O94822</id>
        <label>LTN1</label>
    </interactant>
    <organismsDiffer>false</organismsDiffer>
    <experiments>2</experiments>
</comment>
<comment type="interaction">
    <interactant intactId="EBI-528644">
        <id>P58753</id>
    </interactant>
    <interactant intactId="EBI-447677">
        <id>Q99836</id>
        <label>MYD88</label>
    </interactant>
    <organismsDiffer>false</organismsDiffer>
    <experiments>9</experiments>
</comment>
<comment type="interaction">
    <interactant intactId="EBI-528644">
        <id>P58753</id>
    </interactant>
    <interactant intactId="EBI-79464">
        <id>P27986</id>
        <label>PIK3R1</label>
    </interactant>
    <organismsDiffer>false</organismsDiffer>
    <experiments>3</experiments>
</comment>
<comment type="interaction">
    <interactant intactId="EBI-528644">
        <id>P58753</id>
    </interactant>
    <interactant intactId="EBI-1054601">
        <id>Q9Y3Z3</id>
        <label>SAMHD1</label>
    </interactant>
    <organismsDiffer>false</organismsDiffer>
    <experiments>2</experiments>
</comment>
<comment type="interaction">
    <interactant intactId="EBI-528644">
        <id>P58753</id>
    </interactant>
    <interactant intactId="EBI-528644">
        <id>P58753</id>
        <label>TIRAP</label>
    </interactant>
    <organismsDiffer>false</organismsDiffer>
    <experiments>2</experiments>
</comment>
<comment type="interaction">
    <interactant intactId="EBI-528644">
        <id>P58753</id>
    </interactant>
    <interactant intactId="EBI-528701">
        <id>O00206</id>
        <label>TLR4</label>
    </interactant>
    <organismsDiffer>false</organismsDiffer>
    <experiments>6</experiments>
</comment>
<comment type="interaction">
    <interactant intactId="EBI-528654">
        <id>P58753-2</id>
    </interactant>
    <interactant intactId="EBI-516667">
        <id>P29466</id>
        <label>CASP1</label>
    </interactant>
    <organismsDiffer>false</organismsDiffer>
    <experiments>5</experiments>
</comment>
<comment type="subcellular location">
    <subcellularLocation>
        <location evidence="14">Cytoplasm</location>
    </subcellularLocation>
    <subcellularLocation>
        <location evidence="14">Cell membrane</location>
    </subcellularLocation>
    <subcellularLocation>
        <location evidence="14">Membrane</location>
    </subcellularLocation>
    <text>Colocalizes with DAB2IP at the plasma membrane.</text>
</comment>
<comment type="alternative products">
    <event type="alternative splicing"/>
    <isoform>
        <id>P58753-1</id>
        <name>1</name>
        <sequence type="displayed"/>
    </isoform>
    <isoform>
        <id>P58753-2</id>
        <name>2</name>
        <sequence type="described" ref="VSP_010765"/>
    </isoform>
    <isoform>
        <id>P58753-3</id>
        <name>3</name>
        <sequence type="described" ref="VSP_017239"/>
    </isoform>
</comment>
<comment type="tissue specificity">
    <text>Highly expressed in liver, kidney, spleen, skeletal muscle and heart. Also detected in peripheral blood leukocytes, lung, placenta, small intestine, thymus, colon and brain.</text>
</comment>
<comment type="domain">
    <text evidence="17">(Microbial infection) The TIR domain is structurally mimicked by the TIR domain of B.melitensis protein TcpB.</text>
</comment>
<comment type="PTM">
    <text>Phosphorylated by IRAK1 and IRAK4. Also phosphorylated by BTK.</text>
</comment>
<comment type="PTM">
    <text evidence="8">Polyubiquitinated. Polyubiquitination follows phosphorylation by BTK and leads to TIRAP degradation.</text>
</comment>
<comment type="polymorphism">
    <text evidence="9 11 13">Genetic variations in TIRAP have been proposed to influence susceptibility or resistance to invasive pneumococcal disease, malaria [MIM:611162], and tuberculosis [MIM:607948]. It may define the bacteremia susceptibility locus 1 (BACTS1) [MIM:614382] (PubMed:17322885, PubMed:19602285). Indeed it has been reported that heterozygous carriage of p.Ser180Leu in populations from the U.K., Vietnam, and several African countries may confer protection against invasive pneumococcal disease, bacteremia, malaria, and tuberculosis (PubMed:17322885). However, analyzes of Russian, Ghanaian and Indonesian populations fail to replicate the association between p.Ser180Leu and susceptibility to tuberculosis formerly observed in West African and Algerian populations (PubMed:17322885, PubMed:18305471).</text>
</comment>
<proteinExistence type="evidence at protein level"/>
<organism>
    <name type="scientific">Homo sapiens</name>
    <name type="common">Human</name>
    <dbReference type="NCBI Taxonomy" id="9606"/>
    <lineage>
        <taxon>Eukaryota</taxon>
        <taxon>Metazoa</taxon>
        <taxon>Chordata</taxon>
        <taxon>Craniata</taxon>
        <taxon>Vertebrata</taxon>
        <taxon>Euteleostomi</taxon>
        <taxon>Mammalia</taxon>
        <taxon>Eutheria</taxon>
        <taxon>Euarchontoglires</taxon>
        <taxon>Primates</taxon>
        <taxon>Haplorrhini</taxon>
        <taxon>Catarrhini</taxon>
        <taxon>Hominidae</taxon>
        <taxon>Homo</taxon>
    </lineage>
</organism>
<dbReference type="EMBL" id="AF406652">
    <property type="protein sequence ID" value="AAL01160.1"/>
    <property type="molecule type" value="mRNA"/>
</dbReference>
<dbReference type="EMBL" id="AF378129">
    <property type="protein sequence ID" value="AAL05627.1"/>
    <property type="molecule type" value="mRNA"/>
</dbReference>
<dbReference type="EMBL" id="AF410783">
    <property type="protein sequence ID" value="AAL05036.1"/>
    <property type="molecule type" value="mRNA"/>
</dbReference>
<dbReference type="EMBL" id="AY576785">
    <property type="protein sequence ID" value="AAT90417.1"/>
    <property type="molecule type" value="mRNA"/>
</dbReference>
<dbReference type="EMBL" id="AY576786">
    <property type="protein sequence ID" value="AAT90418.1"/>
    <property type="molecule type" value="mRNA"/>
</dbReference>
<dbReference type="EMBL" id="AY576787">
    <property type="protein sequence ID" value="AAT90419.1"/>
    <property type="molecule type" value="mRNA"/>
</dbReference>
<dbReference type="EMBL" id="AB446477">
    <property type="protein sequence ID" value="BAG55254.1"/>
    <property type="molecule type" value="mRNA"/>
</dbReference>
<dbReference type="EMBL" id="AK124298">
    <property type="protein sequence ID" value="BAG54027.1"/>
    <property type="molecule type" value="mRNA"/>
</dbReference>
<dbReference type="EMBL" id="AK313147">
    <property type="protein sequence ID" value="BAG35965.1"/>
    <property type="molecule type" value="mRNA"/>
</dbReference>
<dbReference type="EMBL" id="AY282416">
    <property type="protein sequence ID" value="AAP31973.1"/>
    <property type="molecule type" value="Genomic_DNA"/>
</dbReference>
<dbReference type="EMBL" id="AP001318">
    <property type="status" value="NOT_ANNOTATED_CDS"/>
    <property type="molecule type" value="Genomic_DNA"/>
</dbReference>
<dbReference type="EMBL" id="CH471065">
    <property type="protein sequence ID" value="EAW67687.1"/>
    <property type="molecule type" value="Genomic_DNA"/>
</dbReference>
<dbReference type="EMBL" id="CH471065">
    <property type="protein sequence ID" value="EAW67689.1"/>
    <property type="molecule type" value="Genomic_DNA"/>
</dbReference>
<dbReference type="EMBL" id="BC032474">
    <property type="protein sequence ID" value="AAH32474.1"/>
    <property type="molecule type" value="mRNA"/>
</dbReference>
<dbReference type="CCDS" id="CCDS41731.1">
    <molecule id="P58753-2"/>
</dbReference>
<dbReference type="CCDS" id="CCDS8472.1">
    <molecule id="P58753-1"/>
</dbReference>
<dbReference type="RefSeq" id="NP_001034750.1">
    <molecule id="P58753-1"/>
    <property type="nucleotide sequence ID" value="NM_001039661.2"/>
</dbReference>
<dbReference type="RefSeq" id="NP_001305705.1">
    <molecule id="P58753-2"/>
    <property type="nucleotide sequence ID" value="NM_001318776.2"/>
</dbReference>
<dbReference type="RefSeq" id="NP_001305706.1">
    <molecule id="P58753-1"/>
    <property type="nucleotide sequence ID" value="NM_001318777.2"/>
</dbReference>
<dbReference type="RefSeq" id="NP_683708.1">
    <molecule id="P58753-2"/>
    <property type="nucleotide sequence ID" value="NM_148910.3"/>
</dbReference>
<dbReference type="RefSeq" id="XP_005271456.2">
    <property type="nucleotide sequence ID" value="XM_005271399.3"/>
</dbReference>
<dbReference type="RefSeq" id="XP_011540878.1">
    <property type="nucleotide sequence ID" value="XM_011542576.2"/>
</dbReference>
<dbReference type="RefSeq" id="XP_016872651.1">
    <property type="nucleotide sequence ID" value="XM_017017162.1"/>
</dbReference>
<dbReference type="PDB" id="2NDH">
    <property type="method" value="NMR"/>
    <property type="chains" value="A=79-221"/>
</dbReference>
<dbReference type="PDB" id="2Y92">
    <property type="method" value="X-ray"/>
    <property type="resolution" value="3.01 A"/>
    <property type="chains" value="A=79-221"/>
</dbReference>
<dbReference type="PDB" id="3UB2">
    <property type="method" value="X-ray"/>
    <property type="resolution" value="2.40 A"/>
    <property type="chains" value="A=78-221"/>
</dbReference>
<dbReference type="PDB" id="3UB3">
    <property type="method" value="X-ray"/>
    <property type="resolution" value="2.75 A"/>
    <property type="chains" value="A=78-221"/>
</dbReference>
<dbReference type="PDB" id="3UB4">
    <property type="method" value="X-ray"/>
    <property type="resolution" value="3.10 A"/>
    <property type="chains" value="A=78-221"/>
</dbReference>
<dbReference type="PDB" id="4FZ5">
    <property type="method" value="X-ray"/>
    <property type="resolution" value="3.60 A"/>
    <property type="chains" value="A/B=72-221"/>
</dbReference>
<dbReference type="PDB" id="4LQD">
    <property type="method" value="X-ray"/>
    <property type="resolution" value="2.45 A"/>
    <property type="chains" value="A=81-221"/>
</dbReference>
<dbReference type="PDB" id="5T7Q">
    <property type="method" value="NMR"/>
    <property type="chains" value="A=15-35"/>
</dbReference>
<dbReference type="PDB" id="5UZB">
    <property type="method" value="EM"/>
    <property type="resolution" value="7.00 A"/>
    <property type="chains" value="A/B/C/D/E/F/G/H/I/J/K/L/M/N=79-221"/>
</dbReference>
<dbReference type="PDB" id="8JZM">
    <property type="method" value="NMR"/>
    <property type="chains" value="A=79-221"/>
</dbReference>
<dbReference type="PDBsum" id="2NDH"/>
<dbReference type="PDBsum" id="2Y92"/>
<dbReference type="PDBsum" id="3UB2"/>
<dbReference type="PDBsum" id="3UB3"/>
<dbReference type="PDBsum" id="3UB4"/>
<dbReference type="PDBsum" id="4FZ5"/>
<dbReference type="PDBsum" id="4LQD"/>
<dbReference type="PDBsum" id="5T7Q"/>
<dbReference type="PDBsum" id="5UZB"/>
<dbReference type="PDBsum" id="8JZM"/>
<dbReference type="EMDB" id="EMD-8625"/>
<dbReference type="SMR" id="P58753"/>
<dbReference type="BioGRID" id="125325">
    <property type="interactions" value="45"/>
</dbReference>
<dbReference type="CORUM" id="P58753"/>
<dbReference type="DIP" id="DIP-33489N"/>
<dbReference type="FunCoup" id="P58753">
    <property type="interactions" value="250"/>
</dbReference>
<dbReference type="IntAct" id="P58753">
    <property type="interactions" value="43"/>
</dbReference>
<dbReference type="MINT" id="P58753"/>
<dbReference type="STRING" id="9606.ENSP00000376445"/>
<dbReference type="TCDB" id="8.A.43.1.22">
    <property type="family name" value="the neat-domain containing methaemoglobin heme sequestration (n-mhs) family"/>
</dbReference>
<dbReference type="GlyGen" id="P58753">
    <property type="glycosylation" value="1 site, 1 O-linked glycan (1 site)"/>
</dbReference>
<dbReference type="iPTMnet" id="P58753"/>
<dbReference type="PhosphoSitePlus" id="P58753"/>
<dbReference type="BioMuta" id="TIRAP"/>
<dbReference type="DMDM" id="50403750"/>
<dbReference type="jPOST" id="P58753"/>
<dbReference type="MassIVE" id="P58753"/>
<dbReference type="PaxDb" id="9606-ENSP00000376445"/>
<dbReference type="PeptideAtlas" id="P58753"/>
<dbReference type="ProteomicsDB" id="57101">
    <molecule id="P58753-1"/>
</dbReference>
<dbReference type="ProteomicsDB" id="57102">
    <molecule id="P58753-2"/>
</dbReference>
<dbReference type="ProteomicsDB" id="57103">
    <molecule id="P58753-3"/>
</dbReference>
<dbReference type="Antibodypedia" id="19148">
    <property type="antibodies" value="526 antibodies from 39 providers"/>
</dbReference>
<dbReference type="DNASU" id="114609"/>
<dbReference type="Ensembl" id="ENST00000392678.7">
    <molecule id="P58753-2"/>
    <property type="protein sequence ID" value="ENSP00000376445.3"/>
    <property type="gene ID" value="ENSG00000150455.15"/>
</dbReference>
<dbReference type="Ensembl" id="ENST00000392679.6">
    <molecule id="P58753-1"/>
    <property type="protein sequence ID" value="ENSP00000376446.1"/>
    <property type="gene ID" value="ENSG00000150455.15"/>
</dbReference>
<dbReference type="Ensembl" id="ENST00000392680.6">
    <molecule id="P58753-1"/>
    <property type="protein sequence ID" value="ENSP00000376447.2"/>
    <property type="gene ID" value="ENSG00000150455.15"/>
</dbReference>
<dbReference type="Ensembl" id="ENST00000479770.2">
    <molecule id="P58753-1"/>
    <property type="protein sequence ID" value="ENSP00000436967.1"/>
    <property type="gene ID" value="ENSG00000150455.15"/>
</dbReference>
<dbReference type="Ensembl" id="ENST00000700488.1">
    <molecule id="P58753-1"/>
    <property type="protein sequence ID" value="ENSP00000515016.1"/>
    <property type="gene ID" value="ENSG00000150455.15"/>
</dbReference>
<dbReference type="Ensembl" id="ENST00000700489.1">
    <molecule id="P58753-1"/>
    <property type="protein sequence ID" value="ENSP00000515017.1"/>
    <property type="gene ID" value="ENSG00000150455.15"/>
</dbReference>
<dbReference type="Ensembl" id="ENST00000700490.1">
    <molecule id="P58753-1"/>
    <property type="protein sequence ID" value="ENSP00000515018.1"/>
    <property type="gene ID" value="ENSG00000150455.15"/>
</dbReference>
<dbReference type="Ensembl" id="ENST00000700491.1">
    <molecule id="P58753-2"/>
    <property type="protein sequence ID" value="ENSP00000515019.1"/>
    <property type="gene ID" value="ENSG00000150455.15"/>
</dbReference>
<dbReference type="Ensembl" id="ENST00000700492.1">
    <molecule id="P58753-2"/>
    <property type="protein sequence ID" value="ENSP00000515021.1"/>
    <property type="gene ID" value="ENSG00000150455.15"/>
</dbReference>
<dbReference type="GeneID" id="114609"/>
<dbReference type="KEGG" id="hsa:114609"/>
<dbReference type="MANE-Select" id="ENST00000392679.6">
    <property type="protein sequence ID" value="ENSP00000376446.1"/>
    <property type="RefSeq nucleotide sequence ID" value="NM_001318777.2"/>
    <property type="RefSeq protein sequence ID" value="NP_001305706.1"/>
</dbReference>
<dbReference type="UCSC" id="uc001qdl.2">
    <molecule id="P58753-1"/>
    <property type="organism name" value="human"/>
</dbReference>
<dbReference type="AGR" id="HGNC:17192"/>
<dbReference type="CTD" id="114609"/>
<dbReference type="DisGeNET" id="114609"/>
<dbReference type="GeneCards" id="TIRAP"/>
<dbReference type="HGNC" id="HGNC:17192">
    <property type="gene designation" value="TIRAP"/>
</dbReference>
<dbReference type="HPA" id="ENSG00000150455">
    <property type="expression patterns" value="Low tissue specificity"/>
</dbReference>
<dbReference type="MalaCards" id="TIRAP"/>
<dbReference type="MIM" id="606252">
    <property type="type" value="gene"/>
</dbReference>
<dbReference type="MIM" id="607948">
    <property type="type" value="phenotype"/>
</dbReference>
<dbReference type="MIM" id="611162">
    <property type="type" value="phenotype"/>
</dbReference>
<dbReference type="MIM" id="614382">
    <property type="type" value="phenotype"/>
</dbReference>
<dbReference type="neXtProt" id="NX_P58753"/>
<dbReference type="OpenTargets" id="ENSG00000150455"/>
<dbReference type="PharmGKB" id="PA134972842"/>
<dbReference type="VEuPathDB" id="HostDB:ENSG00000150455"/>
<dbReference type="eggNOG" id="ENOG502S07Q">
    <property type="taxonomic scope" value="Eukaryota"/>
</dbReference>
<dbReference type="GeneTree" id="ENSGT00510000048428"/>
<dbReference type="HOGENOM" id="CLU_091033_1_0_1"/>
<dbReference type="InParanoid" id="P58753"/>
<dbReference type="OMA" id="MHGWFQK"/>
<dbReference type="OrthoDB" id="9424455at2759"/>
<dbReference type="PAN-GO" id="P58753">
    <property type="GO annotations" value="10 GO annotations based on evolutionary models"/>
</dbReference>
<dbReference type="PhylomeDB" id="P58753"/>
<dbReference type="TreeFam" id="TF330734"/>
<dbReference type="PathwayCommons" id="P58753"/>
<dbReference type="Reactome" id="R-HSA-1236974">
    <property type="pathway name" value="ER-Phagosome pathway"/>
</dbReference>
<dbReference type="Reactome" id="R-HSA-166058">
    <property type="pathway name" value="MyD88:MAL(TIRAP) cascade initiated on plasma membrane"/>
</dbReference>
<dbReference type="Reactome" id="R-HSA-5602498">
    <property type="pathway name" value="MyD88 deficiency (TLR2/4)"/>
</dbReference>
<dbReference type="Reactome" id="R-HSA-5603041">
    <property type="pathway name" value="IRAK4 deficiency (TLR2/4)"/>
</dbReference>
<dbReference type="SignaLink" id="P58753"/>
<dbReference type="SIGNOR" id="P58753"/>
<dbReference type="BioGRID-ORCS" id="114609">
    <property type="hits" value="19 hits in 1161 CRISPR screens"/>
</dbReference>
<dbReference type="ChiTaRS" id="TIRAP">
    <property type="organism name" value="human"/>
</dbReference>
<dbReference type="EvolutionaryTrace" id="P58753"/>
<dbReference type="GenomeRNAi" id="114609"/>
<dbReference type="Pharos" id="P58753">
    <property type="development level" value="Tbio"/>
</dbReference>
<dbReference type="PRO" id="PR:P58753"/>
<dbReference type="Proteomes" id="UP000005640">
    <property type="component" value="Chromosome 11"/>
</dbReference>
<dbReference type="RNAct" id="P58753">
    <property type="molecule type" value="protein"/>
</dbReference>
<dbReference type="Bgee" id="ENSG00000150455">
    <property type="expression patterns" value="Expressed in oviduct epithelium and 113 other cell types or tissues"/>
</dbReference>
<dbReference type="ExpressionAtlas" id="P58753">
    <property type="expression patterns" value="baseline and differential"/>
</dbReference>
<dbReference type="GO" id="GO:0009986">
    <property type="term" value="C:cell surface"/>
    <property type="evidence" value="ECO:0000314"/>
    <property type="project" value="UniProt"/>
</dbReference>
<dbReference type="GO" id="GO:0005737">
    <property type="term" value="C:cytoplasm"/>
    <property type="evidence" value="ECO:0000314"/>
    <property type="project" value="UniProtKB"/>
</dbReference>
<dbReference type="GO" id="GO:0005829">
    <property type="term" value="C:cytosol"/>
    <property type="evidence" value="ECO:0000304"/>
    <property type="project" value="Reactome"/>
</dbReference>
<dbReference type="GO" id="GO:0030139">
    <property type="term" value="C:endocytic vesicle"/>
    <property type="evidence" value="ECO:0000250"/>
    <property type="project" value="BHF-UCL"/>
</dbReference>
<dbReference type="GO" id="GO:0031234">
    <property type="term" value="C:extrinsic component of cytoplasmic side of plasma membrane"/>
    <property type="evidence" value="ECO:0000314"/>
    <property type="project" value="UniProt"/>
</dbReference>
<dbReference type="GO" id="GO:0005886">
    <property type="term" value="C:plasma membrane"/>
    <property type="evidence" value="ECO:0000314"/>
    <property type="project" value="UniProtKB"/>
</dbReference>
<dbReference type="GO" id="GO:0032587">
    <property type="term" value="C:ruffle membrane"/>
    <property type="evidence" value="ECO:0000250"/>
    <property type="project" value="BHF-UCL"/>
</dbReference>
<dbReference type="GO" id="GO:0042802">
    <property type="term" value="F:identical protein binding"/>
    <property type="evidence" value="ECO:0000353"/>
    <property type="project" value="IntAct"/>
</dbReference>
<dbReference type="GO" id="GO:0060090">
    <property type="term" value="F:molecular adaptor activity"/>
    <property type="evidence" value="ECO:0000314"/>
    <property type="project" value="UniProt"/>
</dbReference>
<dbReference type="GO" id="GO:0005546">
    <property type="term" value="F:phosphatidylinositol-4,5-bisphosphate binding"/>
    <property type="evidence" value="ECO:0000250"/>
    <property type="project" value="BHF-UCL"/>
</dbReference>
<dbReference type="GO" id="GO:0005080">
    <property type="term" value="F:protein kinase C binding"/>
    <property type="evidence" value="ECO:0000353"/>
    <property type="project" value="BHF-UCL"/>
</dbReference>
<dbReference type="GO" id="GO:0030674">
    <property type="term" value="F:protein-macromolecule adaptor activity"/>
    <property type="evidence" value="ECO:0000303"/>
    <property type="project" value="BHF-UCL"/>
</dbReference>
<dbReference type="GO" id="GO:0035591">
    <property type="term" value="F:signaling adaptor activity"/>
    <property type="evidence" value="ECO:0000314"/>
    <property type="project" value="UniProt"/>
</dbReference>
<dbReference type="GO" id="GO:0035663">
    <property type="term" value="F:Toll-like receptor 2 binding"/>
    <property type="evidence" value="ECO:0000353"/>
    <property type="project" value="BHF-UCL"/>
</dbReference>
<dbReference type="GO" id="GO:0035662">
    <property type="term" value="F:Toll-like receptor 4 binding"/>
    <property type="evidence" value="ECO:0000353"/>
    <property type="project" value="BHF-UCL"/>
</dbReference>
<dbReference type="GO" id="GO:0070935">
    <property type="term" value="P:3'-UTR-mediated mRNA stabilization"/>
    <property type="evidence" value="ECO:0000314"/>
    <property type="project" value="BHF-UCL"/>
</dbReference>
<dbReference type="GO" id="GO:0007166">
    <property type="term" value="P:cell surface receptor signaling pathway"/>
    <property type="evidence" value="ECO:0000250"/>
    <property type="project" value="BHF-UCL"/>
</dbReference>
<dbReference type="GO" id="GO:0071221">
    <property type="term" value="P:cellular response to bacterial lipopeptide"/>
    <property type="evidence" value="ECO:0000250"/>
    <property type="project" value="BHF-UCL"/>
</dbReference>
<dbReference type="GO" id="GO:0071223">
    <property type="term" value="P:cellular response to lipoteichoic acid"/>
    <property type="evidence" value="ECO:0000250"/>
    <property type="project" value="BHF-UCL"/>
</dbReference>
<dbReference type="GO" id="GO:0050830">
    <property type="term" value="P:defense response to Gram-positive bacterium"/>
    <property type="evidence" value="ECO:0000250"/>
    <property type="project" value="BHF-UCL"/>
</dbReference>
<dbReference type="GO" id="GO:0006954">
    <property type="term" value="P:inflammatory response"/>
    <property type="evidence" value="ECO:0007669"/>
    <property type="project" value="UniProtKB-KW"/>
</dbReference>
<dbReference type="GO" id="GO:0045087">
    <property type="term" value="P:innate immune response"/>
    <property type="evidence" value="ECO:0007669"/>
    <property type="project" value="UniProtKB-KW"/>
</dbReference>
<dbReference type="GO" id="GO:0002755">
    <property type="term" value="P:MyD88-dependent toll-like receptor signaling pathway"/>
    <property type="evidence" value="ECO:0000304"/>
    <property type="project" value="BHF-UCL"/>
</dbReference>
<dbReference type="GO" id="GO:0030099">
    <property type="term" value="P:myeloid cell differentiation"/>
    <property type="evidence" value="ECO:0000250"/>
    <property type="project" value="BHF-UCL"/>
</dbReference>
<dbReference type="GO" id="GO:0030890">
    <property type="term" value="P:positive regulation of B cell proliferation"/>
    <property type="evidence" value="ECO:0000250"/>
    <property type="project" value="BHF-UCL"/>
</dbReference>
<dbReference type="GO" id="GO:0043123">
    <property type="term" value="P:positive regulation of canonical NF-kappaB signal transduction"/>
    <property type="evidence" value="ECO:0000315"/>
    <property type="project" value="BHF-UCL"/>
</dbReference>
<dbReference type="GO" id="GO:2000340">
    <property type="term" value="P:positive regulation of chemokine (C-X-C motif) ligand 1 production"/>
    <property type="evidence" value="ECO:0000250"/>
    <property type="project" value="BHF-UCL"/>
</dbReference>
<dbReference type="GO" id="GO:2000343">
    <property type="term" value="P:positive regulation of chemokine (C-X-C motif) ligand 2 production"/>
    <property type="evidence" value="ECO:0000250"/>
    <property type="project" value="BHF-UCL"/>
</dbReference>
<dbReference type="GO" id="GO:0070374">
    <property type="term" value="P:positive regulation of ERK1 and ERK2 cascade"/>
    <property type="evidence" value="ECO:0000315"/>
    <property type="project" value="BHF-UCL"/>
</dbReference>
<dbReference type="GO" id="GO:0032735">
    <property type="term" value="P:positive regulation of interleukin-12 production"/>
    <property type="evidence" value="ECO:0000250"/>
    <property type="project" value="BHF-UCL"/>
</dbReference>
<dbReference type="GO" id="GO:0032738">
    <property type="term" value="P:positive regulation of interleukin-15 production"/>
    <property type="evidence" value="ECO:0000314"/>
    <property type="project" value="BHF-UCL"/>
</dbReference>
<dbReference type="GO" id="GO:0032755">
    <property type="term" value="P:positive regulation of interleukin-6 production"/>
    <property type="evidence" value="ECO:0000315"/>
    <property type="project" value="BHF-UCL"/>
</dbReference>
<dbReference type="GO" id="GO:0032757">
    <property type="term" value="P:positive regulation of interleukin-8 production"/>
    <property type="evidence" value="ECO:0000315"/>
    <property type="project" value="BHF-UCL"/>
</dbReference>
<dbReference type="GO" id="GO:0046330">
    <property type="term" value="P:positive regulation of JNK cascade"/>
    <property type="evidence" value="ECO:0000315"/>
    <property type="project" value="BHF-UCL"/>
</dbReference>
<dbReference type="GO" id="GO:0090023">
    <property type="term" value="P:positive regulation of neutrophil chemotaxis"/>
    <property type="evidence" value="ECO:0000250"/>
    <property type="project" value="BHF-UCL"/>
</dbReference>
<dbReference type="GO" id="GO:0031334">
    <property type="term" value="P:positive regulation of protein-containing complex assembly"/>
    <property type="evidence" value="ECO:0000314"/>
    <property type="project" value="BHF-UCL"/>
</dbReference>
<dbReference type="GO" id="GO:0034137">
    <property type="term" value="P:positive regulation of toll-like receptor 2 signaling pathway"/>
    <property type="evidence" value="ECO:0000315"/>
    <property type="project" value="BHF-UCL"/>
</dbReference>
<dbReference type="GO" id="GO:0034141">
    <property type="term" value="P:positive regulation of toll-like receptor 3 signaling pathway"/>
    <property type="evidence" value="ECO:0000250"/>
    <property type="project" value="BHF-UCL"/>
</dbReference>
<dbReference type="GO" id="GO:0034145">
    <property type="term" value="P:positive regulation of toll-like receptor 4 signaling pathway"/>
    <property type="evidence" value="ECO:0000315"/>
    <property type="project" value="BHF-UCL"/>
</dbReference>
<dbReference type="GO" id="GO:0032760">
    <property type="term" value="P:positive regulation of tumor necrosis factor production"/>
    <property type="evidence" value="ECO:0000315"/>
    <property type="project" value="BHF-UCL"/>
</dbReference>
<dbReference type="GO" id="GO:0045088">
    <property type="term" value="P:regulation of innate immune response"/>
    <property type="evidence" value="ECO:0000305"/>
    <property type="project" value="BHF-UCL"/>
</dbReference>
<dbReference type="GO" id="GO:0032648">
    <property type="term" value="P:regulation of interferon-beta production"/>
    <property type="evidence" value="ECO:0000250"/>
    <property type="project" value="BHF-UCL"/>
</dbReference>
<dbReference type="GO" id="GO:0032496">
    <property type="term" value="P:response to lipopolysaccharide"/>
    <property type="evidence" value="ECO:0000314"/>
    <property type="project" value="BHF-UCL"/>
</dbReference>
<dbReference type="GO" id="GO:0035665">
    <property type="term" value="P:TIRAP-dependent toll-like receptor 4 signaling pathway"/>
    <property type="evidence" value="ECO:0000314"/>
    <property type="project" value="BHF-UCL"/>
</dbReference>
<dbReference type="GO" id="GO:0034142">
    <property type="term" value="P:toll-like receptor 4 signaling pathway"/>
    <property type="evidence" value="ECO:0000314"/>
    <property type="project" value="UniProt"/>
</dbReference>
<dbReference type="DisProt" id="DP01768"/>
<dbReference type="FunFam" id="3.40.50.10140:FF:000015">
    <property type="entry name" value="Toll/interleukin-1 receptor domain-containing adapter protein"/>
    <property type="match status" value="1"/>
</dbReference>
<dbReference type="Gene3D" id="3.40.50.10140">
    <property type="entry name" value="Toll/interleukin-1 receptor homology (TIR) domain"/>
    <property type="match status" value="1"/>
</dbReference>
<dbReference type="InterPro" id="IPR000157">
    <property type="entry name" value="TIR_dom"/>
</dbReference>
<dbReference type="InterPro" id="IPR017279">
    <property type="entry name" value="Tol-interleuk_rcpt_adapt_Tirap"/>
</dbReference>
<dbReference type="InterPro" id="IPR035897">
    <property type="entry name" value="Toll_tir_struct_dom_sf"/>
</dbReference>
<dbReference type="PANTHER" id="PTHR22662">
    <property type="entry name" value="TIRAP"/>
    <property type="match status" value="1"/>
</dbReference>
<dbReference type="PANTHER" id="PTHR22662:SF0">
    <property type="entry name" value="TOLL_INTERLEUKIN-1 RECEPTOR DOMAIN-CONTAINING ADAPTER PROTEIN"/>
    <property type="match status" value="1"/>
</dbReference>
<dbReference type="Pfam" id="PF13676">
    <property type="entry name" value="TIR_2"/>
    <property type="match status" value="1"/>
</dbReference>
<dbReference type="PIRSF" id="PIRSF037750">
    <property type="entry name" value="TIR_Tirap"/>
    <property type="match status" value="1"/>
</dbReference>
<dbReference type="SUPFAM" id="SSF52200">
    <property type="entry name" value="Toll/Interleukin receptor TIR domain"/>
    <property type="match status" value="1"/>
</dbReference>
<dbReference type="PROSITE" id="PS50104">
    <property type="entry name" value="TIR"/>
    <property type="match status" value="1"/>
</dbReference>
<reference key="1">
    <citation type="journal article" date="2001" name="Nature">
        <title>Mal (MyD88-adapter-like) is required for Toll-like receptor-4 signal transduction.</title>
        <authorList>
            <person name="Fitzgerald K.A."/>
            <person name="Palsson-McDermott E.M."/>
            <person name="Bowie A.G."/>
            <person name="Jefferies C.A."/>
            <person name="Mansell A.S."/>
            <person name="Brady G."/>
            <person name="Brint E."/>
            <person name="Dunne A."/>
            <person name="Gray P."/>
            <person name="Harte M.T."/>
            <person name="McMurray D."/>
            <person name="Smith D.E."/>
            <person name="Sims J.E."/>
            <person name="Bird T.A."/>
            <person name="O'Neill L.A.J."/>
        </authorList>
    </citation>
    <scope>NUCLEOTIDE SEQUENCE [MRNA] (ISOFORM 2)</scope>
    <scope>MUTAGENESIS OF PRO-125</scope>
    <scope>VARIANT ASN-55</scope>
    <source>
        <tissue>Dendritic cell</tissue>
    </source>
</reference>
<reference key="2">
    <citation type="journal article" date="2001" name="Nat. Immunol.">
        <title>TIRAP: an adapter molecule in the Toll signaling pathway.</title>
        <authorList>
            <person name="Horng T."/>
            <person name="Barton G.M."/>
            <person name="Medzhitov R."/>
        </authorList>
    </citation>
    <scope>NUCLEOTIDE SEQUENCE [MRNA] (ISOFORM 2)</scope>
    <scope>MUTAGENESIS OF PRO-125</scope>
    <scope>INTERACTION WITH EIF2AK2</scope>
</reference>
<reference key="3">
    <citation type="submission" date="2001-08" db="EMBL/GenBank/DDBJ databases">
        <title>Characterization and structural analysis of TIR domain-containing adaptor protein Wyatt.</title>
        <authorList>
            <person name="Kirk P.B."/>
            <person name="Pereira J.P."/>
            <person name="Bazan J.F."/>
        </authorList>
    </citation>
    <scope>NUCLEOTIDE SEQUENCE [MRNA] (ISOFORM 1)</scope>
</reference>
<reference key="4">
    <citation type="submission" date="2004-03" db="EMBL/GenBank/DDBJ databases">
        <title>Two isoforms of MAL, generated by alternative splicing, are found in humans but not mice.</title>
        <authorList>
            <person name="Hardy M.P."/>
            <person name="O'Neill L.A.J."/>
        </authorList>
    </citation>
    <scope>NUCLEOTIDE SEQUENCE [MRNA] (ISOFORMS 1 AND 2)</scope>
</reference>
<reference key="5">
    <citation type="journal article" date="2008" name="Immunogenetics">
        <title>Natural selection in the TLR-related genes in the course of primate evolution.</title>
        <authorList>
            <person name="Nakajima T."/>
            <person name="Ohtani H."/>
            <person name="Satta Y."/>
            <person name="Uno Y."/>
            <person name="Akari H."/>
            <person name="Ishida T."/>
            <person name="Kimura A."/>
        </authorList>
    </citation>
    <scope>NUCLEOTIDE SEQUENCE [MRNA] (ISOFORM 1)</scope>
</reference>
<reference key="6">
    <citation type="journal article" date="2004" name="Nat. Genet.">
        <title>Complete sequencing and characterization of 21,243 full-length human cDNAs.</title>
        <authorList>
            <person name="Ota T."/>
            <person name="Suzuki Y."/>
            <person name="Nishikawa T."/>
            <person name="Otsuki T."/>
            <person name="Sugiyama T."/>
            <person name="Irie R."/>
            <person name="Wakamatsu A."/>
            <person name="Hayashi K."/>
            <person name="Sato H."/>
            <person name="Nagai K."/>
            <person name="Kimura K."/>
            <person name="Makita H."/>
            <person name="Sekine M."/>
            <person name="Obayashi M."/>
            <person name="Nishi T."/>
            <person name="Shibahara T."/>
            <person name="Tanaka T."/>
            <person name="Ishii S."/>
            <person name="Yamamoto J."/>
            <person name="Saito K."/>
            <person name="Kawai Y."/>
            <person name="Isono Y."/>
            <person name="Nakamura Y."/>
            <person name="Nagahari K."/>
            <person name="Murakami K."/>
            <person name="Yasuda T."/>
            <person name="Iwayanagi T."/>
            <person name="Wagatsuma M."/>
            <person name="Shiratori A."/>
            <person name="Sudo H."/>
            <person name="Hosoiri T."/>
            <person name="Kaku Y."/>
            <person name="Kodaira H."/>
            <person name="Kondo H."/>
            <person name="Sugawara M."/>
            <person name="Takahashi M."/>
            <person name="Kanda K."/>
            <person name="Yokoi T."/>
            <person name="Furuya T."/>
            <person name="Kikkawa E."/>
            <person name="Omura Y."/>
            <person name="Abe K."/>
            <person name="Kamihara K."/>
            <person name="Katsuta N."/>
            <person name="Sato K."/>
            <person name="Tanikawa M."/>
            <person name="Yamazaki M."/>
            <person name="Ninomiya K."/>
            <person name="Ishibashi T."/>
            <person name="Yamashita H."/>
            <person name="Murakawa K."/>
            <person name="Fujimori K."/>
            <person name="Tanai H."/>
            <person name="Kimata M."/>
            <person name="Watanabe M."/>
            <person name="Hiraoka S."/>
            <person name="Chiba Y."/>
            <person name="Ishida S."/>
            <person name="Ono Y."/>
            <person name="Takiguchi S."/>
            <person name="Watanabe S."/>
            <person name="Yosida M."/>
            <person name="Hotuta T."/>
            <person name="Kusano J."/>
            <person name="Kanehori K."/>
            <person name="Takahashi-Fujii A."/>
            <person name="Hara H."/>
            <person name="Tanase T.-O."/>
            <person name="Nomura Y."/>
            <person name="Togiya S."/>
            <person name="Komai F."/>
            <person name="Hara R."/>
            <person name="Takeuchi K."/>
            <person name="Arita M."/>
            <person name="Imose N."/>
            <person name="Musashino K."/>
            <person name="Yuuki H."/>
            <person name="Oshima A."/>
            <person name="Sasaki N."/>
            <person name="Aotsuka S."/>
            <person name="Yoshikawa Y."/>
            <person name="Matsunawa H."/>
            <person name="Ichihara T."/>
            <person name="Shiohata N."/>
            <person name="Sano S."/>
            <person name="Moriya S."/>
            <person name="Momiyama H."/>
            <person name="Satoh N."/>
            <person name="Takami S."/>
            <person name="Terashima Y."/>
            <person name="Suzuki O."/>
            <person name="Nakagawa S."/>
            <person name="Senoh A."/>
            <person name="Mizoguchi H."/>
            <person name="Goto Y."/>
            <person name="Shimizu F."/>
            <person name="Wakebe H."/>
            <person name="Hishigaki H."/>
            <person name="Watanabe T."/>
            <person name="Sugiyama A."/>
            <person name="Takemoto M."/>
            <person name="Kawakami B."/>
            <person name="Yamazaki M."/>
            <person name="Watanabe K."/>
            <person name="Kumagai A."/>
            <person name="Itakura S."/>
            <person name="Fukuzumi Y."/>
            <person name="Fujimori Y."/>
            <person name="Komiyama M."/>
            <person name="Tashiro H."/>
            <person name="Tanigami A."/>
            <person name="Fujiwara T."/>
            <person name="Ono T."/>
            <person name="Yamada K."/>
            <person name="Fujii Y."/>
            <person name="Ozaki K."/>
            <person name="Hirao M."/>
            <person name="Ohmori Y."/>
            <person name="Kawabata A."/>
            <person name="Hikiji T."/>
            <person name="Kobatake N."/>
            <person name="Inagaki H."/>
            <person name="Ikema Y."/>
            <person name="Okamoto S."/>
            <person name="Okitani R."/>
            <person name="Kawakami T."/>
            <person name="Noguchi S."/>
            <person name="Itoh T."/>
            <person name="Shigeta K."/>
            <person name="Senba T."/>
            <person name="Matsumura K."/>
            <person name="Nakajima Y."/>
            <person name="Mizuno T."/>
            <person name="Morinaga M."/>
            <person name="Sasaki M."/>
            <person name="Togashi T."/>
            <person name="Oyama M."/>
            <person name="Hata H."/>
            <person name="Watanabe M."/>
            <person name="Komatsu T."/>
            <person name="Mizushima-Sugano J."/>
            <person name="Satoh T."/>
            <person name="Shirai Y."/>
            <person name="Takahashi Y."/>
            <person name="Nakagawa K."/>
            <person name="Okumura K."/>
            <person name="Nagase T."/>
            <person name="Nomura N."/>
            <person name="Kikuchi H."/>
            <person name="Masuho Y."/>
            <person name="Yamashita R."/>
            <person name="Nakai K."/>
            <person name="Yada T."/>
            <person name="Nakamura Y."/>
            <person name="Ohara O."/>
            <person name="Isogai T."/>
            <person name="Sugano S."/>
        </authorList>
    </citation>
    <scope>NUCLEOTIDE SEQUENCE [LARGE SCALE MRNA] (ISOFORMS 1 AND 2)</scope>
    <scope>VARIANT ASN-55</scope>
    <source>
        <tissue>Brain</tissue>
        <tissue>Trachea</tissue>
    </source>
</reference>
<reference key="7">
    <citation type="submission" date="2003-04" db="EMBL/GenBank/DDBJ databases">
        <authorList>
            <consortium name="SeattleSNPs variation discovery resource"/>
        </authorList>
    </citation>
    <scope>NUCLEOTIDE SEQUENCE [GENOMIC DNA]</scope>
    <scope>VARIANTS PRO-9; TRP-13; ASN-96 AND LEU-180</scope>
</reference>
<reference key="8">
    <citation type="journal article" date="2006" name="Nature">
        <title>Human chromosome 11 DNA sequence and analysis including novel gene identification.</title>
        <authorList>
            <person name="Taylor T.D."/>
            <person name="Noguchi H."/>
            <person name="Totoki Y."/>
            <person name="Toyoda A."/>
            <person name="Kuroki Y."/>
            <person name="Dewar K."/>
            <person name="Lloyd C."/>
            <person name="Itoh T."/>
            <person name="Takeda T."/>
            <person name="Kim D.-W."/>
            <person name="She X."/>
            <person name="Barlow K.F."/>
            <person name="Bloom T."/>
            <person name="Bruford E."/>
            <person name="Chang J.L."/>
            <person name="Cuomo C.A."/>
            <person name="Eichler E."/>
            <person name="FitzGerald M.G."/>
            <person name="Jaffe D.B."/>
            <person name="LaButti K."/>
            <person name="Nicol R."/>
            <person name="Park H.-S."/>
            <person name="Seaman C."/>
            <person name="Sougnez C."/>
            <person name="Yang X."/>
            <person name="Zimmer A.R."/>
            <person name="Zody M.C."/>
            <person name="Birren B.W."/>
            <person name="Nusbaum C."/>
            <person name="Fujiyama A."/>
            <person name="Hattori M."/>
            <person name="Rogers J."/>
            <person name="Lander E.S."/>
            <person name="Sakaki Y."/>
        </authorList>
    </citation>
    <scope>NUCLEOTIDE SEQUENCE [LARGE SCALE GENOMIC DNA]</scope>
</reference>
<reference key="9">
    <citation type="submission" date="2005-07" db="EMBL/GenBank/DDBJ databases">
        <authorList>
            <person name="Mural R.J."/>
            <person name="Istrail S."/>
            <person name="Sutton G.G."/>
            <person name="Florea L."/>
            <person name="Halpern A.L."/>
            <person name="Mobarry C.M."/>
            <person name="Lippert R."/>
            <person name="Walenz B."/>
            <person name="Shatkay H."/>
            <person name="Dew I."/>
            <person name="Miller J.R."/>
            <person name="Flanigan M.J."/>
            <person name="Edwards N.J."/>
            <person name="Bolanos R."/>
            <person name="Fasulo D."/>
            <person name="Halldorsson B.V."/>
            <person name="Hannenhalli S."/>
            <person name="Turner R."/>
            <person name="Yooseph S."/>
            <person name="Lu F."/>
            <person name="Nusskern D.R."/>
            <person name="Shue B.C."/>
            <person name="Zheng X.H."/>
            <person name="Zhong F."/>
            <person name="Delcher A.L."/>
            <person name="Huson D.H."/>
            <person name="Kravitz S.A."/>
            <person name="Mouchard L."/>
            <person name="Reinert K."/>
            <person name="Remington K.A."/>
            <person name="Clark A.G."/>
            <person name="Waterman M.S."/>
            <person name="Eichler E.E."/>
            <person name="Adams M.D."/>
            <person name="Hunkapiller M.W."/>
            <person name="Myers E.W."/>
            <person name="Venter J.C."/>
        </authorList>
    </citation>
    <scope>NUCLEOTIDE SEQUENCE [LARGE SCALE GENOMIC DNA]</scope>
</reference>
<reference key="10">
    <citation type="journal article" date="2004" name="Genome Res.">
        <title>The status, quality, and expansion of the NIH full-length cDNA project: the Mammalian Gene Collection (MGC).</title>
        <authorList>
            <consortium name="The MGC Project Team"/>
        </authorList>
    </citation>
    <scope>NUCLEOTIDE SEQUENCE [LARGE SCALE MRNA] (ISOFORM 3)</scope>
    <source>
        <tissue>Blood</tissue>
    </source>
</reference>
<reference key="11">
    <citation type="journal article" date="2003" name="J. Immunol.">
        <title>Toll/IL-1 receptor domain-containing adapter inducing IFN-beta (TRIF) associates with TNF receptor-associated factor 6 and TANK-binding kinase 1, and activates two distinct transcription factors, NF-kappa B and IFN-regulatory factor-3, in the Toll-like receptor signaling.</title>
        <authorList>
            <person name="Sato S."/>
            <person name="Sugiyama M."/>
            <person name="Yamamoto M."/>
            <person name="Watanabe Y."/>
            <person name="Kawai T."/>
            <person name="Takeda K."/>
            <person name="Akira S."/>
        </authorList>
    </citation>
    <scope>INTERACTION WITH TBK1</scope>
</reference>
<reference key="12">
    <citation type="journal article" date="2006" name="Nat. Immunol.">
        <title>Suppressor of cytokine signaling 1 negatively regulates Toll-like receptor signaling by mediating Mal degradation.</title>
        <authorList>
            <person name="Mansell A."/>
            <person name="Smith R."/>
            <person name="Doyle S.L."/>
            <person name="Gray P."/>
            <person name="Fenner J.E."/>
            <person name="Crack P.J."/>
            <person name="Nicholson S.E."/>
            <person name="Hilton D.J."/>
            <person name="O'Neill L.A."/>
            <person name="Hertzog P.J."/>
        </authorList>
    </citation>
    <scope>PHOSPHORYLATION BY BTK</scope>
    <scope>UBIQUITINATION</scope>
</reference>
<reference key="13">
    <citation type="journal article" date="2008" name="J. Immunol.">
        <title>Etk/BMX, a Btk family tyrosine kinase, and Mal contribute to the cross-talk between MyD88 and FAK pathways.</title>
        <authorList>
            <person name="Semaan N."/>
            <person name="Alsaleh G."/>
            <person name="Gottenberg J.E."/>
            <person name="Wachsmann D."/>
            <person name="Sibilia J."/>
        </authorList>
    </citation>
    <scope>FUNCTION</scope>
    <scope>INTERACTION WITH BMX</scope>
</reference>
<reference key="14">
    <citation type="journal article" date="2009" name="J. Biol. Chem.">
        <title>A TIR domain variant of MyD88 adapter-like (Mal)/TIRAP results in loss of MyD88 binding and reduced TLR2/TLR4 signaling.</title>
        <authorList>
            <person name="Nagpal K."/>
            <person name="Plantinga T.S."/>
            <person name="Wong J."/>
            <person name="Monks B.G."/>
            <person name="Gay N.J."/>
            <person name="Netea M.G."/>
            <person name="Fitzgerald K.A."/>
            <person name="Golenbock D.T."/>
        </authorList>
    </citation>
    <scope>FUNCTION</scope>
    <scope>INTERACTION WITH MYD88</scope>
    <scope>VARIANT ASN-96</scope>
    <scope>CHARACTERIZATION OF VARIANTS PRO-9; TRP-13; ASN-96; LEU-180 AND ILE-197</scope>
</reference>
<reference key="15">
    <citation type="journal article" date="2010" name="J. Biol. Chem.">
        <title>AIP1 functions as Arf6-GAP to negatively regulate TLR4 signaling.</title>
        <authorList>
            <person name="Wan T."/>
            <person name="Liu T."/>
            <person name="Zhang H."/>
            <person name="Tang S."/>
            <person name="Min W."/>
        </authorList>
    </citation>
    <scope>INTERACTION WITH MYD88</scope>
    <scope>SUBCELLULAR LOCATION</scope>
</reference>
<reference key="16">
    <citation type="journal article" date="2010" name="J. Biol. Chem.">
        <title>IRAK1 and IRAK4 promote phosphorylation, ubiquitination, and degradation of MyD88 adaptor-like (Mal).</title>
        <authorList>
            <person name="Dunne A."/>
            <person name="Carpenter S."/>
            <person name="Brikos C."/>
            <person name="Gray P."/>
            <person name="Strelow A."/>
            <person name="Wesche H."/>
            <person name="Morrice N."/>
            <person name="O'Neill L.A."/>
        </authorList>
    </citation>
    <scope>PHOSPHORYLATION BY IRAK1 AND IRAK4</scope>
</reference>
<reference key="17">
    <citation type="journal article" date="2011" name="PLoS ONE">
        <title>TIRAP, an adaptor protein for TLR2/4, transduces a signal from RAGE phosphorylated upon ligand binding.</title>
        <authorList>
            <person name="Sakaguchi M."/>
            <person name="Murata H."/>
            <person name="Yamamoto K."/>
            <person name="Ono T."/>
            <person name="Sakaguchi Y."/>
            <person name="Motoyama A."/>
            <person name="Hibino T."/>
            <person name="Kataoka K."/>
            <person name="Huh N.H."/>
        </authorList>
    </citation>
    <scope>INTERACTION WITH RAGE/AGER</scope>
    <scope>FUNCTION</scope>
</reference>
<reference key="18">
    <citation type="journal article" date="2014" name="J. Biol. Chem.">
        <title>Mechanism of bacterial interference with TLR4 signaling by Brucella Toll/interleukin-1 receptor domain-containing protein TcpB.</title>
        <authorList>
            <person name="Alaidarous M."/>
            <person name="Ve T."/>
            <person name="Casey L.W."/>
            <person name="Valkov E."/>
            <person name="Ericsson D.J."/>
            <person name="Ullah M.O."/>
            <person name="Schembri M.A."/>
            <person name="Mansell A."/>
            <person name="Sweet M.J."/>
            <person name="Kobe B."/>
        </authorList>
    </citation>
    <scope>INTERACTION WITH B.MELITENSIS PROTEIN TCPB (MICROBIAL INFECTION)</scope>
</reference>
<reference key="19">
    <citation type="journal article" date="2016" name="Biochem. Biophys. Res. Commun.">
        <title>Brucella TIR-like protein TcpB/Btp1 specifically targets the host adaptor protein MAL/TIRAP to promote infection.</title>
        <authorList>
            <person name="Li W."/>
            <person name="Ke Y."/>
            <person name="Wang Y."/>
            <person name="Yang M."/>
            <person name="Gao J."/>
            <person name="Zhan S."/>
            <person name="Xinying D."/>
            <person name="Huang L."/>
            <person name="Li W."/>
            <person name="Chen Z."/>
            <person name="Li J."/>
        </authorList>
    </citation>
    <scope>INTERACTION WITH B.MELITENSIS PROTEIN TCPB (MICROBIAL INFECTION)</scope>
</reference>
<reference evidence="25" key="20">
    <citation type="journal article" date="2011" name="Proc. Natl. Acad. Sci. U.S.A.">
        <title>Crystal structure of Toll-like receptor adaptor MAL/TIRAP reveals the molecular basis for signal transduction and disease protection.</title>
        <authorList>
            <person name="Valkov E."/>
            <person name="Stamp A."/>
            <person name="Dimaio F."/>
            <person name="Baker D."/>
            <person name="Verstak B."/>
            <person name="Roversi P."/>
            <person name="Kellie S."/>
            <person name="Sweet M.J."/>
            <person name="Mansell A."/>
            <person name="Gay N.J."/>
            <person name="Martin J.L."/>
            <person name="Kobe B."/>
        </authorList>
    </citation>
    <scope>X-RAY CRYSTALLOGRAPHY (3.01 ANGSTROMS) OF 79-221</scope>
    <scope>SUBUNIT</scope>
    <scope>DISULFIDE BONDS</scope>
</reference>
<reference evidence="26" key="21">
    <citation type="journal article" date="2014" name="J. Biol. Chem.">
        <title>Crystal structures of the Toll/Interleukin-1 receptor (TIR) domains from the Brucella protein TcpB and host adaptor TIRAP reveal mechanisms of molecular mimicry.</title>
        <authorList>
            <person name="Snyder G.A."/>
            <person name="Deredge D."/>
            <person name="Waldhuber A."/>
            <person name="Fresquez T."/>
            <person name="Wilkins D.Z."/>
            <person name="Smith P.T."/>
            <person name="Durr S."/>
            <person name="Cirl C."/>
            <person name="Jiang J."/>
            <person name="Jennings W."/>
            <person name="Luchetti T."/>
            <person name="Snyder N."/>
            <person name="Sundberg E.J."/>
            <person name="Wintrode P."/>
            <person name="Miethke T."/>
            <person name="Xiao T.S."/>
        </authorList>
    </citation>
    <scope>X-RAY CRYSTALLOGRAPHY (2.45 ANGSTROMS) OF 81-221</scope>
    <scope>INTERACTION WITH B.MELITENSIS TCPB (MICROBIAL INFECTION)</scope>
    <scope>DOMAIN (MICROBIAL INFECTION)</scope>
    <scope>DISULFIDE BONDS</scope>
</reference>
<reference key="22">
    <citation type="journal article" date="2007" name="Nat. Genet.">
        <title>A Mal functional variant is associated with protection against invasive pneumococcal disease, bacteremia, malaria and tuberculosis.</title>
        <authorList>
            <person name="Khor C.C."/>
            <person name="Chapman S.J."/>
            <person name="Vannberg F.O."/>
            <person name="Dunne A."/>
            <person name="Murphy C."/>
            <person name="Ling E.Y."/>
            <person name="Frodsham A.J."/>
            <person name="Walley A.J."/>
            <person name="Kyrieleis O."/>
            <person name="Khan A."/>
            <person name="Aucan C."/>
            <person name="Segal S."/>
            <person name="Moore C.E."/>
            <person name="Knox K."/>
            <person name="Campbell S.J."/>
            <person name="Lienhardt C."/>
            <person name="Scott A."/>
            <person name="Aaby P."/>
            <person name="Sow O.Y."/>
            <person name="Grignani R.T."/>
            <person name="Sillah J."/>
            <person name="Sirugo G."/>
            <person name="Peshu N."/>
            <person name="Williams T.N."/>
            <person name="Maitland K."/>
            <person name="Davies R.J.O."/>
            <person name="Kwiatkowski D.P."/>
            <person name="Day N.P."/>
            <person name="Yala D."/>
            <person name="Crook D.W."/>
            <person name="Marsh K."/>
            <person name="Berkley J.A."/>
            <person name="O'Neill L.A.J."/>
            <person name="Hill A.V.S."/>
        </authorList>
    </citation>
    <scope>VARIANT LEU-180</scope>
    <scope>POLYMORPHISM</scope>
    <scope>INTERACTION WITH MYD88 AND TLR2</scope>
    <scope>HOMODIMERIZATION</scope>
</reference>
<reference key="23">
    <citation type="journal article" date="2008" name="Nat. Genet.">
        <title>Analysis of association of the TIRAP (MAL) S180L variant and tuberculosis in three populations.</title>
        <authorList>
            <person name="Nejentsev S."/>
            <person name="Thye T."/>
            <person name="Szeszko J.S."/>
            <person name="Stevens H."/>
            <person name="Balabanova Y."/>
            <person name="Chinbuah A.M."/>
            <person name="Hibberd M."/>
            <person name="van de Vosse E."/>
            <person name="Alisjahbana B."/>
            <person name="van Crevel R."/>
            <person name="Ottenhoff T.H."/>
            <person name="Png E."/>
            <person name="Drobniewski F."/>
            <person name="Todd J.A."/>
            <person name="Seielstad M."/>
            <person name="Horstmann R.D."/>
        </authorList>
    </citation>
    <scope>VARIANT LEU-180</scope>
    <scope>POLYMORPHISM</scope>
</reference>
<reference key="24">
    <citation type="journal article" date="2009" name="BMC Med. Genet.">
        <title>Low frequency of the TIRAP S180L polymorphism in Africa, and its potential role in malaria, sepsis, and leprosy.</title>
        <authorList>
            <person name="Hamann L."/>
            <person name="Kumpf O."/>
            <person name="Schuring R.P."/>
            <person name="Alpsoy E."/>
            <person name="Bedu-Addo G."/>
            <person name="Bienzle U."/>
            <person name="Oskam L."/>
            <person name="Mockenhaupt F.P."/>
            <person name="Schumann R.R."/>
        </authorList>
    </citation>
    <scope>VARIANT LEU-180</scope>
    <scope>POLYMORPHISM</scope>
</reference>
<evidence type="ECO:0000250" key="1"/>
<evidence type="ECO:0000255" key="2">
    <source>
        <dbReference type="PROSITE-ProRule" id="PRU00204"/>
    </source>
</evidence>
<evidence type="ECO:0000256" key="3">
    <source>
        <dbReference type="SAM" id="MobiDB-lite"/>
    </source>
</evidence>
<evidence type="ECO:0000269" key="4">
    <source>
    </source>
</evidence>
<evidence type="ECO:0000269" key="5">
    <source>
    </source>
</evidence>
<evidence type="ECO:0000269" key="6">
    <source>
    </source>
</evidence>
<evidence type="ECO:0000269" key="7">
    <source>
    </source>
</evidence>
<evidence type="ECO:0000269" key="8">
    <source>
    </source>
</evidence>
<evidence type="ECO:0000269" key="9">
    <source>
    </source>
</evidence>
<evidence type="ECO:0000269" key="10">
    <source>
    </source>
</evidence>
<evidence type="ECO:0000269" key="11">
    <source>
    </source>
</evidence>
<evidence type="ECO:0000269" key="12">
    <source>
    </source>
</evidence>
<evidence type="ECO:0000269" key="13">
    <source>
    </source>
</evidence>
<evidence type="ECO:0000269" key="14">
    <source>
    </source>
</evidence>
<evidence type="ECO:0000269" key="15">
    <source>
    </source>
</evidence>
<evidence type="ECO:0000269" key="16">
    <source>
    </source>
</evidence>
<evidence type="ECO:0000269" key="17">
    <source>
    </source>
</evidence>
<evidence type="ECO:0000269" key="18">
    <source>
    </source>
</evidence>
<evidence type="ECO:0000269" key="19">
    <source ref="7"/>
</evidence>
<evidence type="ECO:0000303" key="20">
    <source>
    </source>
</evidence>
<evidence type="ECO:0000303" key="21">
    <source>
    </source>
</evidence>
<evidence type="ECO:0000303" key="22">
    <source>
    </source>
</evidence>
<evidence type="ECO:0000303" key="23">
    <source>
    </source>
</evidence>
<evidence type="ECO:0000303" key="24">
    <source ref="4"/>
</evidence>
<evidence type="ECO:0000312" key="25">
    <source>
        <dbReference type="PDB" id="2Y92"/>
    </source>
</evidence>
<evidence type="ECO:0000312" key="26">
    <source>
        <dbReference type="PDB" id="4LQD"/>
    </source>
</evidence>
<evidence type="ECO:0007829" key="27">
    <source>
        <dbReference type="PDB" id="2NDH"/>
    </source>
</evidence>
<evidence type="ECO:0007829" key="28">
    <source>
        <dbReference type="PDB" id="3UB2"/>
    </source>
</evidence>
<evidence type="ECO:0007829" key="29">
    <source>
        <dbReference type="PDB" id="5T7Q"/>
    </source>
</evidence>
<name>TIRAP_HUMAN</name>